<dbReference type="EMBL" id="AY126437">
    <property type="protein sequence ID" value="AAM95701.1"/>
    <property type="molecule type" value="mRNA"/>
</dbReference>
<dbReference type="EMBL" id="AB096256">
    <property type="protein sequence ID" value="BAC57998.1"/>
    <property type="molecule type" value="mRNA"/>
</dbReference>
<dbReference type="EMBL" id="AY358351">
    <property type="protein sequence ID" value="AAQ88717.1"/>
    <property type="molecule type" value="mRNA"/>
</dbReference>
<dbReference type="EMBL" id="AK022859">
    <property type="protein sequence ID" value="BAB14276.1"/>
    <property type="status" value="ALT_INIT"/>
    <property type="molecule type" value="mRNA"/>
</dbReference>
<dbReference type="EMBL" id="AK094595">
    <property type="protein sequence ID" value="BAC04382.1"/>
    <property type="status" value="ALT_INIT"/>
    <property type="molecule type" value="mRNA"/>
</dbReference>
<dbReference type="EMBL" id="AK128132">
    <property type="protein sequence ID" value="BAG54634.1"/>
    <property type="molecule type" value="mRNA"/>
</dbReference>
<dbReference type="EMBL" id="AL359384">
    <property type="status" value="NOT_ANNOTATED_CDS"/>
    <property type="molecule type" value="Genomic_DNA"/>
</dbReference>
<dbReference type="EMBL" id="AL359832">
    <property type="status" value="NOT_ANNOTATED_CDS"/>
    <property type="molecule type" value="Genomic_DNA"/>
</dbReference>
<dbReference type="EMBL" id="CH471083">
    <property type="protein sequence ID" value="EAW54420.1"/>
    <property type="molecule type" value="Genomic_DNA"/>
</dbReference>
<dbReference type="EMBL" id="CH471083">
    <property type="protein sequence ID" value="EAW54421.1"/>
    <property type="molecule type" value="Genomic_DNA"/>
</dbReference>
<dbReference type="CCDS" id="CCDS58083.1">
    <molecule id="Q8IZJ1-2"/>
</dbReference>
<dbReference type="CCDS" id="CCDS7309.1">
    <molecule id="Q8IZJ1-1"/>
</dbReference>
<dbReference type="RefSeq" id="NP_001231818.1">
    <molecule id="Q8IZJ1-2"/>
    <property type="nucleotide sequence ID" value="NM_001244889.2"/>
</dbReference>
<dbReference type="RefSeq" id="NP_734465.2">
    <molecule id="Q8IZJ1-1"/>
    <property type="nucleotide sequence ID" value="NM_170744.4"/>
</dbReference>
<dbReference type="SMR" id="Q8IZJ1"/>
<dbReference type="BioGRID" id="128567">
    <property type="interactions" value="93"/>
</dbReference>
<dbReference type="CORUM" id="Q8IZJ1"/>
<dbReference type="DIP" id="DIP-46275N"/>
<dbReference type="FunCoup" id="Q8IZJ1">
    <property type="interactions" value="347"/>
</dbReference>
<dbReference type="IntAct" id="Q8IZJ1">
    <property type="interactions" value="40"/>
</dbReference>
<dbReference type="MINT" id="Q8IZJ1"/>
<dbReference type="STRING" id="9606.ENSP00000334329"/>
<dbReference type="GlyCosmos" id="Q8IZJ1">
    <property type="glycosylation" value="3 sites, 1 glycan"/>
</dbReference>
<dbReference type="GlyGen" id="Q8IZJ1">
    <property type="glycosylation" value="3 sites, 2 N-linked glycans (2 sites), 1 O-linked glycan (1 site)"/>
</dbReference>
<dbReference type="iPTMnet" id="Q8IZJ1"/>
<dbReference type="PhosphoSitePlus" id="Q8IZJ1"/>
<dbReference type="SwissPalm" id="Q8IZJ1"/>
<dbReference type="BioMuta" id="UNC5B"/>
<dbReference type="DMDM" id="54036589"/>
<dbReference type="jPOST" id="Q8IZJ1"/>
<dbReference type="MassIVE" id="Q8IZJ1"/>
<dbReference type="PaxDb" id="9606-ENSP00000334329"/>
<dbReference type="PeptideAtlas" id="Q8IZJ1"/>
<dbReference type="ProteomicsDB" id="71355">
    <molecule id="Q8IZJ1-1"/>
</dbReference>
<dbReference type="ProteomicsDB" id="71356">
    <molecule id="Q8IZJ1-2"/>
</dbReference>
<dbReference type="Pumba" id="Q8IZJ1"/>
<dbReference type="Antibodypedia" id="2329">
    <property type="antibodies" value="199 antibodies from 32 providers"/>
</dbReference>
<dbReference type="DNASU" id="219699"/>
<dbReference type="Ensembl" id="ENST00000335350.10">
    <molecule id="Q8IZJ1-1"/>
    <property type="protein sequence ID" value="ENSP00000334329.6"/>
    <property type="gene ID" value="ENSG00000107731.12"/>
</dbReference>
<dbReference type="Ensembl" id="ENST00000373192.4">
    <molecule id="Q8IZJ1-2"/>
    <property type="protein sequence ID" value="ENSP00000362288.4"/>
    <property type="gene ID" value="ENSG00000107731.12"/>
</dbReference>
<dbReference type="GeneID" id="219699"/>
<dbReference type="KEGG" id="hsa:219699"/>
<dbReference type="MANE-Select" id="ENST00000335350.10">
    <property type="protein sequence ID" value="ENSP00000334329.6"/>
    <property type="RefSeq nucleotide sequence ID" value="NM_170744.5"/>
    <property type="RefSeq protein sequence ID" value="NP_734465.2"/>
</dbReference>
<dbReference type="UCSC" id="uc001jro.4">
    <molecule id="Q8IZJ1-1"/>
    <property type="organism name" value="human"/>
</dbReference>
<dbReference type="AGR" id="HGNC:12568"/>
<dbReference type="CTD" id="219699"/>
<dbReference type="DisGeNET" id="219699"/>
<dbReference type="GeneCards" id="UNC5B"/>
<dbReference type="HGNC" id="HGNC:12568">
    <property type="gene designation" value="UNC5B"/>
</dbReference>
<dbReference type="HPA" id="ENSG00000107731">
    <property type="expression patterns" value="Low tissue specificity"/>
</dbReference>
<dbReference type="MIM" id="607870">
    <property type="type" value="gene"/>
</dbReference>
<dbReference type="neXtProt" id="NX_Q8IZJ1"/>
<dbReference type="OpenTargets" id="ENSG00000107731"/>
<dbReference type="PharmGKB" id="PA37205"/>
<dbReference type="VEuPathDB" id="HostDB:ENSG00000107731"/>
<dbReference type="eggNOG" id="KOG1480">
    <property type="taxonomic scope" value="Eukaryota"/>
</dbReference>
<dbReference type="GeneTree" id="ENSGT00950000182815"/>
<dbReference type="HOGENOM" id="CLU_014383_0_0_1"/>
<dbReference type="InParanoid" id="Q8IZJ1"/>
<dbReference type="OMA" id="WEAKHQE"/>
<dbReference type="OrthoDB" id="5973910at2759"/>
<dbReference type="PAN-GO" id="Q8IZJ1">
    <property type="GO annotations" value="2 GO annotations based on evolutionary models"/>
</dbReference>
<dbReference type="PhylomeDB" id="Q8IZJ1"/>
<dbReference type="TreeFam" id="TF316767"/>
<dbReference type="PathwayCommons" id="Q8IZJ1"/>
<dbReference type="Reactome" id="R-HSA-373752">
    <property type="pathway name" value="Netrin-1 signaling"/>
</dbReference>
<dbReference type="Reactome" id="R-HSA-418886">
    <property type="pathway name" value="Netrin mediated repulsion signals"/>
</dbReference>
<dbReference type="Reactome" id="R-HSA-418889">
    <property type="pathway name" value="Caspase activation via Dependence Receptors in the absence of ligand"/>
</dbReference>
<dbReference type="SignaLink" id="Q8IZJ1"/>
<dbReference type="SIGNOR" id="Q8IZJ1"/>
<dbReference type="BioGRID-ORCS" id="219699">
    <property type="hits" value="10 hits in 1158 CRISPR screens"/>
</dbReference>
<dbReference type="ChiTaRS" id="UNC5B">
    <property type="organism name" value="human"/>
</dbReference>
<dbReference type="GenomeRNAi" id="219699"/>
<dbReference type="Pharos" id="Q8IZJ1">
    <property type="development level" value="Tbio"/>
</dbReference>
<dbReference type="PRO" id="PR:Q8IZJ1"/>
<dbReference type="Proteomes" id="UP000005640">
    <property type="component" value="Chromosome 10"/>
</dbReference>
<dbReference type="RNAct" id="Q8IZJ1">
    <property type="molecule type" value="protein"/>
</dbReference>
<dbReference type="Bgee" id="ENSG00000107731">
    <property type="expression patterns" value="Expressed in inferior vagus X ganglion and 189 other cell types or tissues"/>
</dbReference>
<dbReference type="GO" id="GO:0045121">
    <property type="term" value="C:membrane raft"/>
    <property type="evidence" value="ECO:0007669"/>
    <property type="project" value="UniProtKB-SubCell"/>
</dbReference>
<dbReference type="GO" id="GO:0005886">
    <property type="term" value="C:plasma membrane"/>
    <property type="evidence" value="ECO:0000304"/>
    <property type="project" value="Reactome"/>
</dbReference>
<dbReference type="GO" id="GO:0005042">
    <property type="term" value="F:netrin receptor activity"/>
    <property type="evidence" value="ECO:0000318"/>
    <property type="project" value="GO_Central"/>
</dbReference>
<dbReference type="GO" id="GO:0001525">
    <property type="term" value="P:angiogenesis"/>
    <property type="evidence" value="ECO:0007669"/>
    <property type="project" value="UniProtKB-KW"/>
</dbReference>
<dbReference type="GO" id="GO:0033564">
    <property type="term" value="P:anterior/posterior axon guidance"/>
    <property type="evidence" value="ECO:0000318"/>
    <property type="project" value="GO_Central"/>
</dbReference>
<dbReference type="GO" id="GO:0006915">
    <property type="term" value="P:apoptotic process"/>
    <property type="evidence" value="ECO:0007669"/>
    <property type="project" value="UniProtKB-KW"/>
</dbReference>
<dbReference type="GO" id="GO:2001240">
    <property type="term" value="P:negative regulation of extrinsic apoptotic signaling pathway in absence of ligand"/>
    <property type="evidence" value="ECO:0000315"/>
    <property type="project" value="UniProtKB"/>
</dbReference>
<dbReference type="GO" id="GO:0043524">
    <property type="term" value="P:negative regulation of neuron apoptotic process"/>
    <property type="evidence" value="ECO:0000315"/>
    <property type="project" value="UniProtKB"/>
</dbReference>
<dbReference type="GO" id="GO:0051897">
    <property type="term" value="P:positive regulation of phosphatidylinositol 3-kinase/protein kinase B signal transduction"/>
    <property type="evidence" value="ECO:0000315"/>
    <property type="project" value="UniProtKB"/>
</dbReference>
<dbReference type="CDD" id="cd08802">
    <property type="entry name" value="Death_UNC5B"/>
    <property type="match status" value="1"/>
</dbReference>
<dbReference type="FunFam" id="1.10.533.10:FF:000001">
    <property type="entry name" value="Unc-5 netrin receptor B"/>
    <property type="match status" value="1"/>
</dbReference>
<dbReference type="FunFam" id="2.20.100.10:FF:000002">
    <property type="entry name" value="Unc-5 netrin receptor C"/>
    <property type="match status" value="1"/>
</dbReference>
<dbReference type="FunFam" id="2.20.100.10:FF:000008">
    <property type="entry name" value="Unc-5 netrin receptor C"/>
    <property type="match status" value="1"/>
</dbReference>
<dbReference type="FunFam" id="2.60.220.30:FF:000003">
    <property type="entry name" value="Unc-5 netrin receptor C"/>
    <property type="match status" value="1"/>
</dbReference>
<dbReference type="FunFam" id="2.60.40.10:FF:000037">
    <property type="entry name" value="Unc-5 netrin receptor C"/>
    <property type="match status" value="1"/>
</dbReference>
<dbReference type="FunFam" id="2.60.40.10:FF:000039">
    <property type="entry name" value="Unc-5 netrin receptor C"/>
    <property type="match status" value="1"/>
</dbReference>
<dbReference type="Gene3D" id="2.60.220.30">
    <property type="match status" value="1"/>
</dbReference>
<dbReference type="Gene3D" id="1.10.533.10">
    <property type="entry name" value="Death Domain, Fas"/>
    <property type="match status" value="1"/>
</dbReference>
<dbReference type="Gene3D" id="2.60.40.10">
    <property type="entry name" value="Immunoglobulins"/>
    <property type="match status" value="2"/>
</dbReference>
<dbReference type="Gene3D" id="2.20.100.10">
    <property type="entry name" value="Thrombospondin type-1 (TSP1) repeat"/>
    <property type="match status" value="2"/>
</dbReference>
<dbReference type="InterPro" id="IPR011029">
    <property type="entry name" value="DEATH-like_dom_sf"/>
</dbReference>
<dbReference type="InterPro" id="IPR000488">
    <property type="entry name" value="Death_dom"/>
</dbReference>
<dbReference type="InterPro" id="IPR042156">
    <property type="entry name" value="Death_UNC5B"/>
</dbReference>
<dbReference type="InterPro" id="IPR007110">
    <property type="entry name" value="Ig-like_dom"/>
</dbReference>
<dbReference type="InterPro" id="IPR036179">
    <property type="entry name" value="Ig-like_dom_sf"/>
</dbReference>
<dbReference type="InterPro" id="IPR013783">
    <property type="entry name" value="Ig-like_fold"/>
</dbReference>
<dbReference type="InterPro" id="IPR013098">
    <property type="entry name" value="Ig_I-set"/>
</dbReference>
<dbReference type="InterPro" id="IPR003599">
    <property type="entry name" value="Ig_sub"/>
</dbReference>
<dbReference type="InterPro" id="IPR003598">
    <property type="entry name" value="Ig_sub2"/>
</dbReference>
<dbReference type="InterPro" id="IPR000884">
    <property type="entry name" value="TSP1_rpt"/>
</dbReference>
<dbReference type="InterPro" id="IPR036383">
    <property type="entry name" value="TSP1_rpt_sf"/>
</dbReference>
<dbReference type="InterPro" id="IPR037936">
    <property type="entry name" value="UNC5"/>
</dbReference>
<dbReference type="InterPro" id="IPR033772">
    <property type="entry name" value="UPA"/>
</dbReference>
<dbReference type="InterPro" id="IPR000906">
    <property type="entry name" value="ZU5_dom"/>
</dbReference>
<dbReference type="PANTHER" id="PTHR12582">
    <property type="entry name" value="NETRIN RECEPTOR UNC5"/>
    <property type="match status" value="1"/>
</dbReference>
<dbReference type="PANTHER" id="PTHR12582:SF6">
    <property type="entry name" value="NETRIN RECEPTOR UNC5B"/>
    <property type="match status" value="1"/>
</dbReference>
<dbReference type="Pfam" id="PF00531">
    <property type="entry name" value="Death"/>
    <property type="match status" value="1"/>
</dbReference>
<dbReference type="Pfam" id="PF07679">
    <property type="entry name" value="I-set"/>
    <property type="match status" value="1"/>
</dbReference>
<dbReference type="Pfam" id="PF00090">
    <property type="entry name" value="TSP_1"/>
    <property type="match status" value="2"/>
</dbReference>
<dbReference type="Pfam" id="PF17217">
    <property type="entry name" value="UPA"/>
    <property type="match status" value="1"/>
</dbReference>
<dbReference type="Pfam" id="PF00791">
    <property type="entry name" value="ZU5"/>
    <property type="match status" value="1"/>
</dbReference>
<dbReference type="PRINTS" id="PR01705">
    <property type="entry name" value="TSP1REPEAT"/>
</dbReference>
<dbReference type="SMART" id="SM00005">
    <property type="entry name" value="DEATH"/>
    <property type="match status" value="1"/>
</dbReference>
<dbReference type="SMART" id="SM00409">
    <property type="entry name" value="IG"/>
    <property type="match status" value="2"/>
</dbReference>
<dbReference type="SMART" id="SM00408">
    <property type="entry name" value="IGc2"/>
    <property type="match status" value="1"/>
</dbReference>
<dbReference type="SMART" id="SM00209">
    <property type="entry name" value="TSP1"/>
    <property type="match status" value="2"/>
</dbReference>
<dbReference type="SMART" id="SM00218">
    <property type="entry name" value="ZU5"/>
    <property type="match status" value="1"/>
</dbReference>
<dbReference type="SUPFAM" id="SSF47986">
    <property type="entry name" value="DEATH domain"/>
    <property type="match status" value="1"/>
</dbReference>
<dbReference type="SUPFAM" id="SSF48726">
    <property type="entry name" value="Immunoglobulin"/>
    <property type="match status" value="2"/>
</dbReference>
<dbReference type="SUPFAM" id="SSF82895">
    <property type="entry name" value="TSP-1 type 1 repeat"/>
    <property type="match status" value="2"/>
</dbReference>
<dbReference type="PROSITE" id="PS50835">
    <property type="entry name" value="IG_LIKE"/>
    <property type="match status" value="1"/>
</dbReference>
<dbReference type="PROSITE" id="PS50092">
    <property type="entry name" value="TSP1"/>
    <property type="match status" value="2"/>
</dbReference>
<dbReference type="PROSITE" id="PS51145">
    <property type="entry name" value="ZU5"/>
    <property type="match status" value="1"/>
</dbReference>
<sequence>MGARSGARGALLLALLLCWDPRLSQAGTDSGSEVLPDSFPSAPAEPLPYFLQEPQDAYIVKNKPVELRCRAFPATQIYFKCNGEWVSQNDHVTQEGLDEATGLRVREVQIEVSRQQVEELFGLEDYWCQCVAWSSAGTTKSRRAYVRIAYLRKNFDQEPLGKEVPLDHEVLLQCRPPEGVPVAEVEWLKNEDVIDPTQDTNFLLTIDHNLIIRQARLSDTANYTCVAKNIVAKRRSTTATVIVYVNGGWSSWAEWSPCSNRCGRGWQKRTRTCTNPAPLNGGAFCEGQAFQKTACTTICPVDGAWTEWSKWSACSTECAHWRSRECMAPPPQNGGRDCSGTLLDSKNCTDGLCMQNKKTLSDPNSHLLEASGDAALYAGLVVAIFVVVAILMAVGVVVYRRNCRDFDTDITDSSAALTGGFHPVNFKTARPSNPQLLHPSVPPDLTASAGIYRGPVYALQDSTDKIPMTNSPLLDPLPSLKVKVYSSSTTGSGPGLADGADLLGVLPPGTYPSDFARDTHFLHLRSASLGSQQLLGLPRDPGSSVSGTFGCLGGRLSIPGTGVSLLVPNGAIPQGKFYEMYLLINKAESTLPLSEGTQTVLSPSVTCGPTGLLLCRPVILTMPHCAEVSARDWIFQLKTQAHQGHWEEVVTLDEETLNTPCYCQLEPRACHILLDQLGTYVFTGESYSRSAVKRLQLAVFAPALCTSLEYSLRVYCLEDTPVALKEVLELERTLGGYLVEEPKPLMFKDSYHNLRLSLHDLPHAHWRSKLLAKYQEIPFYHIWSGSQKALHCTFTLERHSLASTELTCKICVRQVEGEGQIFQLHTTLAETPAGSLDTLCSAPGSTVTTQLGPYAFKIPLSIRQKICNSLDAPNSRGNDWRMLAQKLSMDRYLNYFATKASPTGVILDLWEALQQDDGDLNSLASALEEMGKSEMLVAVATDGDC</sequence>
<evidence type="ECO:0000250" key="1"/>
<evidence type="ECO:0000250" key="2">
    <source>
        <dbReference type="UniProtKB" id="O08722"/>
    </source>
</evidence>
<evidence type="ECO:0000250" key="3">
    <source>
        <dbReference type="UniProtKB" id="O08747"/>
    </source>
</evidence>
<evidence type="ECO:0000250" key="4">
    <source>
        <dbReference type="UniProtKB" id="Q6ZN44"/>
    </source>
</evidence>
<evidence type="ECO:0000250" key="5">
    <source>
        <dbReference type="UniProtKB" id="Q8K1S3"/>
    </source>
</evidence>
<evidence type="ECO:0000255" key="6"/>
<evidence type="ECO:0000255" key="7">
    <source>
        <dbReference type="PROSITE-ProRule" id="PRU00210"/>
    </source>
</evidence>
<evidence type="ECO:0000255" key="8">
    <source>
        <dbReference type="PROSITE-ProRule" id="PRU00485"/>
    </source>
</evidence>
<evidence type="ECO:0000269" key="9">
    <source>
    </source>
</evidence>
<evidence type="ECO:0000269" key="10">
    <source>
    </source>
</evidence>
<evidence type="ECO:0000269" key="11">
    <source>
    </source>
</evidence>
<evidence type="ECO:0000269" key="12">
    <source>
    </source>
</evidence>
<evidence type="ECO:0000269" key="13">
    <source>
    </source>
</evidence>
<evidence type="ECO:0000303" key="14">
    <source>
    </source>
</evidence>
<evidence type="ECO:0000303" key="15">
    <source>
    </source>
</evidence>
<evidence type="ECO:0000305" key="16"/>
<evidence type="ECO:0000305" key="17">
    <source>
    </source>
</evidence>
<feature type="signal peptide" evidence="6">
    <location>
        <begin position="1"/>
        <end position="26"/>
    </location>
</feature>
<feature type="chain" id="PRO_0000036071" description="Netrin receptor UNC5B">
    <location>
        <begin position="27"/>
        <end position="945"/>
    </location>
</feature>
<feature type="topological domain" description="Extracellular" evidence="6">
    <location>
        <begin position="27"/>
        <end position="377"/>
    </location>
</feature>
<feature type="transmembrane region" description="Helical" evidence="6">
    <location>
        <begin position="378"/>
        <end position="398"/>
    </location>
</feature>
<feature type="topological domain" description="Cytoplasmic" evidence="6">
    <location>
        <begin position="399"/>
        <end position="945"/>
    </location>
</feature>
<feature type="domain" description="Ig-like">
    <location>
        <begin position="48"/>
        <end position="145"/>
    </location>
</feature>
<feature type="domain" description="Ig-like C2-type">
    <location>
        <begin position="147"/>
        <end position="242"/>
    </location>
</feature>
<feature type="domain" description="TSP type-1 1" evidence="7">
    <location>
        <begin position="246"/>
        <end position="300"/>
    </location>
</feature>
<feature type="domain" description="TSP type-1 2" evidence="7">
    <location>
        <begin position="302"/>
        <end position="354"/>
    </location>
</feature>
<feature type="domain" description="ZU5" evidence="8">
    <location>
        <begin position="543"/>
        <end position="686"/>
    </location>
</feature>
<feature type="domain" description="Death">
    <location>
        <begin position="865"/>
        <end position="943"/>
    </location>
</feature>
<feature type="region of interest" description="UPA domain" evidence="1">
    <location>
        <begin position="689"/>
        <end position="838"/>
    </location>
</feature>
<feature type="region of interest" description="Interaction with DCC" evidence="2">
    <location>
        <begin position="707"/>
        <end position="725"/>
    </location>
</feature>
<feature type="site" description="Cleavage; by caspase-3" evidence="17">
    <location>
        <begin position="412"/>
        <end position="413"/>
    </location>
</feature>
<feature type="modified residue" description="Phosphotyrosine" evidence="3">
    <location>
        <position position="581"/>
    </location>
</feature>
<feature type="lipid moiety-binding region" description="S-palmitoyl cysteine" evidence="2">
    <location>
        <position position="403"/>
    </location>
</feature>
<feature type="glycosylation site" description="N-linked (GlcNAc...) asparagine" evidence="6">
    <location>
        <position position="222"/>
    </location>
</feature>
<feature type="glycosylation site" description="N-linked (GlcNAc...) asparagine" evidence="6">
    <location>
        <position position="347"/>
    </location>
</feature>
<feature type="disulfide bond" evidence="4">
    <location>
        <begin position="69"/>
        <end position="130"/>
    </location>
</feature>
<feature type="disulfide bond" evidence="4">
    <location>
        <begin position="81"/>
        <end position="128"/>
    </location>
</feature>
<feature type="disulfide bond" evidence="4">
    <location>
        <begin position="174"/>
        <end position="225"/>
    </location>
</feature>
<feature type="disulfide bond" evidence="1">
    <location>
        <begin position="258"/>
        <end position="295"/>
    </location>
</feature>
<feature type="disulfide bond" evidence="1">
    <location>
        <begin position="262"/>
        <end position="299"/>
    </location>
</feature>
<feature type="disulfide bond" evidence="1">
    <location>
        <begin position="273"/>
        <end position="285"/>
    </location>
</feature>
<feature type="disulfide bond" evidence="4">
    <location>
        <begin position="314"/>
        <end position="348"/>
    </location>
</feature>
<feature type="disulfide bond" evidence="4">
    <location>
        <begin position="318"/>
        <end position="353"/>
    </location>
</feature>
<feature type="disulfide bond" evidence="4">
    <location>
        <begin position="326"/>
        <end position="338"/>
    </location>
</feature>
<feature type="splice variant" id="VSP_011698" description="In isoform 2." evidence="14">
    <original>NKKTLSDPNSHL</original>
    <variation>M</variation>
    <location>
        <begin position="356"/>
        <end position="367"/>
    </location>
</feature>
<feature type="sequence variant" id="VAR_052472" description="In dbSNP:rs34957097.">
    <original>I</original>
    <variation>V</variation>
    <location>
        <position position="242"/>
    </location>
</feature>
<feature type="sequence variant" id="VAR_019730" description="In dbSNP:rs10509332.">
    <original>A</original>
    <variation>T</variation>
    <location>
        <position position="516"/>
    </location>
</feature>
<feature type="mutagenesis site" description="Abolishes cleavage by caspase-3 and subsequent induction of apoptosis." evidence="10">
    <original>D</original>
    <variation>N</variation>
    <location>
        <position position="412"/>
    </location>
</feature>
<feature type="sequence conflict" description="In Ref. 3; BAC04382." evidence="16" ref="3">
    <original>K</original>
    <variation>E</variation>
    <location>
        <position position="483"/>
    </location>
</feature>
<feature type="sequence conflict" description="In Ref. 3; BAB14276." evidence="16" ref="3">
    <original>L</original>
    <variation>P</variation>
    <location>
        <position position="851"/>
    </location>
</feature>
<comment type="function">
    <text evidence="2 5 10">Receptor for netrin required for axon guidance. Mediates axon repulsion of neuronal growth cones in the developing nervous system upon ligand binding. Axon repulsion in growth cones may be caused by its association with DCC that may trigger signaling for repulsion (By similarity). Functions as a netrin receptor that negatively regulates vascular branching during angiogenesis. Mediates retraction of tip cell filopodia on endothelial growth cones in response to netrin (By similarity). It also acts as a dependence receptor required for apoptosis induction when not associated with netrin ligand (PubMed:12598906). Mediates apoptosis by activating DAPK1. In the absence of NTN1, activates DAPK1 by reducing its autoinhibitory phosphorylation at Ser-308 thereby increasing its catalytic activity (By similarity).</text>
</comment>
<comment type="subunit">
    <text evidence="2 9 11 12 13">Interacts with the cytoplasmic part of DCC (By similarity). Interacts with GNAI2 via its cytoplasmic part (PubMed:12359238). Interacts (via death domain) with DAPK1 (via death domain) (PubMed:15729359, PubMed:18582460). Interacts (via extracellular domain) with FLRT3 (via extracellular domain); the interaction is direct (PubMed:26235030). Interacts (via extracellular domain) with FLRT2 and FLRT3 (via extracellular domain), but has higher affinity for FLRT3 (PubMed:25374360). Identified in a complex with FLRT3 and ADGRL3; does not interact with ADGRL3 by itself (PubMed:26235030).</text>
</comment>
<comment type="interaction">
    <interactant intactId="EBI-4409075">
        <id>Q8IZJ1</id>
    </interactant>
    <interactant intactId="EBI-4409108">
        <id>Q8CGU4</id>
        <label>Agap2</label>
    </interactant>
    <organismsDiffer>true</organismsDiffer>
    <experiments>9</experiments>
</comment>
<comment type="interaction">
    <interactant intactId="EBI-10832046">
        <id>Q8IZJ1-2</id>
    </interactant>
    <interactant intactId="EBI-2678626">
        <id>O95631</id>
        <label>NTN1</label>
    </interactant>
    <organismsDiffer>false</organismsDiffer>
    <experiments>2</experiments>
</comment>
<comment type="subcellular location">
    <subcellularLocation>
        <location evidence="13">Cell membrane</location>
        <topology evidence="2">Single-pass type I membrane protein</topology>
    </subcellularLocation>
    <subcellularLocation>
        <location evidence="2">Membrane raft</location>
    </subcellularLocation>
    <text evidence="2">Associated with lipid rafts.</text>
</comment>
<comment type="alternative products">
    <event type="alternative splicing"/>
    <isoform>
        <id>Q8IZJ1-1</id>
        <name>1</name>
        <sequence type="displayed"/>
    </isoform>
    <isoform>
        <id>Q8IZJ1-2</id>
        <name>2</name>
        <sequence type="described" ref="VSP_011698"/>
    </isoform>
</comment>
<comment type="tissue specificity">
    <text evidence="9">Highly expressed in brain. Also expressed at lower level in developing lung, cartilage, kidney and hematopoietic and immune tissues.</text>
</comment>
<comment type="induction">
    <text>By p53/TP53.</text>
</comment>
<comment type="PTM">
    <text evidence="1">Phosphorylated on cytoplasmic tyrosine residues.</text>
</comment>
<comment type="PTM">
    <text evidence="10">Proteolytically cleaved by caspases during apoptosis. The cleavage does not take place when the receptor is associated with netrin ligand. Its cleavage by caspases is required to induce apoptosis.</text>
</comment>
<comment type="PTM">
    <text evidence="2">Palmitoylation is required for pro-apoptotic activity, but not for location at lipid rafts.</text>
</comment>
<comment type="miscellaneous">
    <text>Down-regulated in multiple cancers including colorectal, breast, ovary, uterus, stomach, lung, or kidney cancers.</text>
</comment>
<comment type="similarity">
    <text evidence="16">Belongs to the unc-5 family.</text>
</comment>
<comment type="sequence caution" evidence="16">
    <conflict type="erroneous initiation">
        <sequence resource="EMBL-CDS" id="BAB14276"/>
    </conflict>
</comment>
<comment type="sequence caution" evidence="16">
    <conflict type="erroneous initiation">
        <sequence resource="EMBL-CDS" id="BAC04382"/>
    </conflict>
</comment>
<protein>
    <recommendedName>
        <fullName>Netrin receptor UNC5B</fullName>
    </recommendedName>
    <alternativeName>
        <fullName>Protein unc-5 homolog 2</fullName>
    </alternativeName>
    <alternativeName>
        <fullName>Protein unc-5 homolog B</fullName>
    </alternativeName>
    <alternativeName>
        <fullName evidence="15">p53-regulated receptor for death and life protein 1</fullName>
        <shortName evidence="15">p53RDL1</shortName>
    </alternativeName>
</protein>
<proteinExistence type="evidence at protein level"/>
<gene>
    <name type="primary">UNC5B</name>
    <name evidence="15" type="synonym">P53RDL1</name>
    <name evidence="14" type="synonym">UNC5H2</name>
    <name type="ORF">UNQ1883/PRO4326</name>
</gene>
<accession>Q8IZJ1</accession>
<accession>Q5T3R9</accession>
<accession>Q5T3S0</accession>
<accession>Q86SN3</accession>
<accession>Q8N1Y2</accession>
<accession>Q9H9F3</accession>
<reference key="1">
    <citation type="journal article" date="2002" name="Biochem. Biophys. Res. Commun.">
        <title>Modulation of G(ialpha(2)) signaling by the axonal guidance molecule UNC5H2.</title>
        <authorList>
            <person name="Komatsuzaki K."/>
            <person name="Dalvin S."/>
            <person name="Kinane T.B."/>
        </authorList>
    </citation>
    <scope>NUCLEOTIDE SEQUENCE [MRNA] (ISOFORM 2)</scope>
    <scope>TISSUE SPECIFICITY</scope>
    <scope>INTERACTION WITH GNAI2</scope>
    <source>
        <tissue>Lung</tissue>
    </source>
</reference>
<reference key="2">
    <citation type="journal article" date="2003" name="Nat. Cell Biol.">
        <title>p53RDL1 regulates of p53-dependent apoptosis.</title>
        <authorList>
            <person name="Tanikawa C."/>
            <person name="Matsuda K."/>
            <person name="Fukuda S."/>
            <person name="Nakamura Y."/>
            <person name="Arakawa H."/>
        </authorList>
    </citation>
    <scope>NUCLEOTIDE SEQUENCE [MRNA] (ISOFORM 1)</scope>
    <scope>FUNCTION</scope>
    <scope>MUTAGENESIS OF ASP-412</scope>
</reference>
<reference key="3">
    <citation type="journal article" date="2003" name="Genome Res.">
        <title>The secreted protein discovery initiative (SPDI), a large-scale effort to identify novel human secreted and transmembrane proteins: a bioinformatics assessment.</title>
        <authorList>
            <person name="Clark H.F."/>
            <person name="Gurney A.L."/>
            <person name="Abaya E."/>
            <person name="Baker K."/>
            <person name="Baldwin D.T."/>
            <person name="Brush J."/>
            <person name="Chen J."/>
            <person name="Chow B."/>
            <person name="Chui C."/>
            <person name="Crowley C."/>
            <person name="Currell B."/>
            <person name="Deuel B."/>
            <person name="Dowd P."/>
            <person name="Eaton D."/>
            <person name="Foster J.S."/>
            <person name="Grimaldi C."/>
            <person name="Gu Q."/>
            <person name="Hass P.E."/>
            <person name="Heldens S."/>
            <person name="Huang A."/>
            <person name="Kim H.S."/>
            <person name="Klimowski L."/>
            <person name="Jin Y."/>
            <person name="Johnson S."/>
            <person name="Lee J."/>
            <person name="Lewis L."/>
            <person name="Liao D."/>
            <person name="Mark M.R."/>
            <person name="Robbie E."/>
            <person name="Sanchez C."/>
            <person name="Schoenfeld J."/>
            <person name="Seshagiri S."/>
            <person name="Simmons L."/>
            <person name="Singh J."/>
            <person name="Smith V."/>
            <person name="Stinson J."/>
            <person name="Vagts A."/>
            <person name="Vandlen R.L."/>
            <person name="Watanabe C."/>
            <person name="Wieand D."/>
            <person name="Woods K."/>
            <person name="Xie M.-H."/>
            <person name="Yansura D.G."/>
            <person name="Yi S."/>
            <person name="Yu G."/>
            <person name="Yuan J."/>
            <person name="Zhang M."/>
            <person name="Zhang Z."/>
            <person name="Goddard A.D."/>
            <person name="Wood W.I."/>
            <person name="Godowski P.J."/>
            <person name="Gray A.M."/>
        </authorList>
    </citation>
    <scope>NUCLEOTIDE SEQUENCE [LARGE SCALE MRNA] (ISOFORM 1)</scope>
</reference>
<reference key="4">
    <citation type="journal article" date="2004" name="Nat. Genet.">
        <title>Complete sequencing and characterization of 21,243 full-length human cDNAs.</title>
        <authorList>
            <person name="Ota T."/>
            <person name="Suzuki Y."/>
            <person name="Nishikawa T."/>
            <person name="Otsuki T."/>
            <person name="Sugiyama T."/>
            <person name="Irie R."/>
            <person name="Wakamatsu A."/>
            <person name="Hayashi K."/>
            <person name="Sato H."/>
            <person name="Nagai K."/>
            <person name="Kimura K."/>
            <person name="Makita H."/>
            <person name="Sekine M."/>
            <person name="Obayashi M."/>
            <person name="Nishi T."/>
            <person name="Shibahara T."/>
            <person name="Tanaka T."/>
            <person name="Ishii S."/>
            <person name="Yamamoto J."/>
            <person name="Saito K."/>
            <person name="Kawai Y."/>
            <person name="Isono Y."/>
            <person name="Nakamura Y."/>
            <person name="Nagahari K."/>
            <person name="Murakami K."/>
            <person name="Yasuda T."/>
            <person name="Iwayanagi T."/>
            <person name="Wagatsuma M."/>
            <person name="Shiratori A."/>
            <person name="Sudo H."/>
            <person name="Hosoiri T."/>
            <person name="Kaku Y."/>
            <person name="Kodaira H."/>
            <person name="Kondo H."/>
            <person name="Sugawara M."/>
            <person name="Takahashi M."/>
            <person name="Kanda K."/>
            <person name="Yokoi T."/>
            <person name="Furuya T."/>
            <person name="Kikkawa E."/>
            <person name="Omura Y."/>
            <person name="Abe K."/>
            <person name="Kamihara K."/>
            <person name="Katsuta N."/>
            <person name="Sato K."/>
            <person name="Tanikawa M."/>
            <person name="Yamazaki M."/>
            <person name="Ninomiya K."/>
            <person name="Ishibashi T."/>
            <person name="Yamashita H."/>
            <person name="Murakawa K."/>
            <person name="Fujimori K."/>
            <person name="Tanai H."/>
            <person name="Kimata M."/>
            <person name="Watanabe M."/>
            <person name="Hiraoka S."/>
            <person name="Chiba Y."/>
            <person name="Ishida S."/>
            <person name="Ono Y."/>
            <person name="Takiguchi S."/>
            <person name="Watanabe S."/>
            <person name="Yosida M."/>
            <person name="Hotuta T."/>
            <person name="Kusano J."/>
            <person name="Kanehori K."/>
            <person name="Takahashi-Fujii A."/>
            <person name="Hara H."/>
            <person name="Tanase T.-O."/>
            <person name="Nomura Y."/>
            <person name="Togiya S."/>
            <person name="Komai F."/>
            <person name="Hara R."/>
            <person name="Takeuchi K."/>
            <person name="Arita M."/>
            <person name="Imose N."/>
            <person name="Musashino K."/>
            <person name="Yuuki H."/>
            <person name="Oshima A."/>
            <person name="Sasaki N."/>
            <person name="Aotsuka S."/>
            <person name="Yoshikawa Y."/>
            <person name="Matsunawa H."/>
            <person name="Ichihara T."/>
            <person name="Shiohata N."/>
            <person name="Sano S."/>
            <person name="Moriya S."/>
            <person name="Momiyama H."/>
            <person name="Satoh N."/>
            <person name="Takami S."/>
            <person name="Terashima Y."/>
            <person name="Suzuki O."/>
            <person name="Nakagawa S."/>
            <person name="Senoh A."/>
            <person name="Mizoguchi H."/>
            <person name="Goto Y."/>
            <person name="Shimizu F."/>
            <person name="Wakebe H."/>
            <person name="Hishigaki H."/>
            <person name="Watanabe T."/>
            <person name="Sugiyama A."/>
            <person name="Takemoto M."/>
            <person name="Kawakami B."/>
            <person name="Yamazaki M."/>
            <person name="Watanabe K."/>
            <person name="Kumagai A."/>
            <person name="Itakura S."/>
            <person name="Fukuzumi Y."/>
            <person name="Fujimori Y."/>
            <person name="Komiyama M."/>
            <person name="Tashiro H."/>
            <person name="Tanigami A."/>
            <person name="Fujiwara T."/>
            <person name="Ono T."/>
            <person name="Yamada K."/>
            <person name="Fujii Y."/>
            <person name="Ozaki K."/>
            <person name="Hirao M."/>
            <person name="Ohmori Y."/>
            <person name="Kawabata A."/>
            <person name="Hikiji T."/>
            <person name="Kobatake N."/>
            <person name="Inagaki H."/>
            <person name="Ikema Y."/>
            <person name="Okamoto S."/>
            <person name="Okitani R."/>
            <person name="Kawakami T."/>
            <person name="Noguchi S."/>
            <person name="Itoh T."/>
            <person name="Shigeta K."/>
            <person name="Senba T."/>
            <person name="Matsumura K."/>
            <person name="Nakajima Y."/>
            <person name="Mizuno T."/>
            <person name="Morinaga M."/>
            <person name="Sasaki M."/>
            <person name="Togashi T."/>
            <person name="Oyama M."/>
            <person name="Hata H."/>
            <person name="Watanabe M."/>
            <person name="Komatsu T."/>
            <person name="Mizushima-Sugano J."/>
            <person name="Satoh T."/>
            <person name="Shirai Y."/>
            <person name="Takahashi Y."/>
            <person name="Nakagawa K."/>
            <person name="Okumura K."/>
            <person name="Nagase T."/>
            <person name="Nomura N."/>
            <person name="Kikuchi H."/>
            <person name="Masuho Y."/>
            <person name="Yamashita R."/>
            <person name="Nakai K."/>
            <person name="Yada T."/>
            <person name="Nakamura Y."/>
            <person name="Ohara O."/>
            <person name="Isogai T."/>
            <person name="Sugano S."/>
        </authorList>
    </citation>
    <scope>NUCLEOTIDE SEQUENCE [LARGE SCALE MRNA]</scope>
    <source>
        <tissue>Amygdala</tissue>
        <tissue>Teratocarcinoma</tissue>
        <tissue>Testis</tissue>
    </source>
</reference>
<reference key="5">
    <citation type="journal article" date="2004" name="Nature">
        <title>The DNA sequence and comparative analysis of human chromosome 10.</title>
        <authorList>
            <person name="Deloukas P."/>
            <person name="Earthrowl M.E."/>
            <person name="Grafham D.V."/>
            <person name="Rubenfield M."/>
            <person name="French L."/>
            <person name="Steward C.A."/>
            <person name="Sims S.K."/>
            <person name="Jones M.C."/>
            <person name="Searle S."/>
            <person name="Scott C."/>
            <person name="Howe K."/>
            <person name="Hunt S.E."/>
            <person name="Andrews T.D."/>
            <person name="Gilbert J.G.R."/>
            <person name="Swarbreck D."/>
            <person name="Ashurst J.L."/>
            <person name="Taylor A."/>
            <person name="Battles J."/>
            <person name="Bird C.P."/>
            <person name="Ainscough R."/>
            <person name="Almeida J.P."/>
            <person name="Ashwell R.I.S."/>
            <person name="Ambrose K.D."/>
            <person name="Babbage A.K."/>
            <person name="Bagguley C.L."/>
            <person name="Bailey J."/>
            <person name="Banerjee R."/>
            <person name="Bates K."/>
            <person name="Beasley H."/>
            <person name="Bray-Allen S."/>
            <person name="Brown A.J."/>
            <person name="Brown J.Y."/>
            <person name="Burford D.C."/>
            <person name="Burrill W."/>
            <person name="Burton J."/>
            <person name="Cahill P."/>
            <person name="Camire D."/>
            <person name="Carter N.P."/>
            <person name="Chapman J.C."/>
            <person name="Clark S.Y."/>
            <person name="Clarke G."/>
            <person name="Clee C.M."/>
            <person name="Clegg S."/>
            <person name="Corby N."/>
            <person name="Coulson A."/>
            <person name="Dhami P."/>
            <person name="Dutta I."/>
            <person name="Dunn M."/>
            <person name="Faulkner L."/>
            <person name="Frankish A."/>
            <person name="Frankland J.A."/>
            <person name="Garner P."/>
            <person name="Garnett J."/>
            <person name="Gribble S."/>
            <person name="Griffiths C."/>
            <person name="Grocock R."/>
            <person name="Gustafson E."/>
            <person name="Hammond S."/>
            <person name="Harley J.L."/>
            <person name="Hart E."/>
            <person name="Heath P.D."/>
            <person name="Ho T.P."/>
            <person name="Hopkins B."/>
            <person name="Horne J."/>
            <person name="Howden P.J."/>
            <person name="Huckle E."/>
            <person name="Hynds C."/>
            <person name="Johnson C."/>
            <person name="Johnson D."/>
            <person name="Kana A."/>
            <person name="Kay M."/>
            <person name="Kimberley A.M."/>
            <person name="Kershaw J.K."/>
            <person name="Kokkinaki M."/>
            <person name="Laird G.K."/>
            <person name="Lawlor S."/>
            <person name="Lee H.M."/>
            <person name="Leongamornlert D.A."/>
            <person name="Laird G."/>
            <person name="Lloyd C."/>
            <person name="Lloyd D.M."/>
            <person name="Loveland J."/>
            <person name="Lovell J."/>
            <person name="McLaren S."/>
            <person name="McLay K.E."/>
            <person name="McMurray A."/>
            <person name="Mashreghi-Mohammadi M."/>
            <person name="Matthews L."/>
            <person name="Milne S."/>
            <person name="Nickerson T."/>
            <person name="Nguyen M."/>
            <person name="Overton-Larty E."/>
            <person name="Palmer S.A."/>
            <person name="Pearce A.V."/>
            <person name="Peck A.I."/>
            <person name="Pelan S."/>
            <person name="Phillimore B."/>
            <person name="Porter K."/>
            <person name="Rice C.M."/>
            <person name="Rogosin A."/>
            <person name="Ross M.T."/>
            <person name="Sarafidou T."/>
            <person name="Sehra H.K."/>
            <person name="Shownkeen R."/>
            <person name="Skuce C.D."/>
            <person name="Smith M."/>
            <person name="Standring L."/>
            <person name="Sycamore N."/>
            <person name="Tester J."/>
            <person name="Thorpe A."/>
            <person name="Torcasso W."/>
            <person name="Tracey A."/>
            <person name="Tromans A."/>
            <person name="Tsolas J."/>
            <person name="Wall M."/>
            <person name="Walsh J."/>
            <person name="Wang H."/>
            <person name="Weinstock K."/>
            <person name="West A.P."/>
            <person name="Willey D.L."/>
            <person name="Whitehead S.L."/>
            <person name="Wilming L."/>
            <person name="Wray P.W."/>
            <person name="Young L."/>
            <person name="Chen Y."/>
            <person name="Lovering R.C."/>
            <person name="Moschonas N.K."/>
            <person name="Siebert R."/>
            <person name="Fechtel K."/>
            <person name="Bentley D."/>
            <person name="Durbin R.M."/>
            <person name="Hubbard T."/>
            <person name="Doucette-Stamm L."/>
            <person name="Beck S."/>
            <person name="Smith D.R."/>
            <person name="Rogers J."/>
        </authorList>
    </citation>
    <scope>NUCLEOTIDE SEQUENCE [LARGE SCALE GENOMIC DNA]</scope>
</reference>
<reference key="6">
    <citation type="submission" date="2005-07" db="EMBL/GenBank/DDBJ databases">
        <authorList>
            <person name="Mural R.J."/>
            <person name="Istrail S."/>
            <person name="Sutton G.G."/>
            <person name="Florea L."/>
            <person name="Halpern A.L."/>
            <person name="Mobarry C.M."/>
            <person name="Lippert R."/>
            <person name="Walenz B."/>
            <person name="Shatkay H."/>
            <person name="Dew I."/>
            <person name="Miller J.R."/>
            <person name="Flanigan M.J."/>
            <person name="Edwards N.J."/>
            <person name="Bolanos R."/>
            <person name="Fasulo D."/>
            <person name="Halldorsson B.V."/>
            <person name="Hannenhalli S."/>
            <person name="Turner R."/>
            <person name="Yooseph S."/>
            <person name="Lu F."/>
            <person name="Nusskern D.R."/>
            <person name="Shue B.C."/>
            <person name="Zheng X.H."/>
            <person name="Zhong F."/>
            <person name="Delcher A.L."/>
            <person name="Huson D.H."/>
            <person name="Kravitz S.A."/>
            <person name="Mouchard L."/>
            <person name="Reinert K."/>
            <person name="Remington K.A."/>
            <person name="Clark A.G."/>
            <person name="Waterman M.S."/>
            <person name="Eichler E.E."/>
            <person name="Adams M.D."/>
            <person name="Hunkapiller M.W."/>
            <person name="Myers E.W."/>
            <person name="Venter J.C."/>
        </authorList>
    </citation>
    <scope>NUCLEOTIDE SEQUENCE [LARGE SCALE GENOMIC DNA]</scope>
</reference>
<reference key="7">
    <citation type="journal article" date="2003" name="Proc. Natl. Acad. Sci. U.S.A.">
        <title>The netrin-1 receptors UNC5H are putative tumor suppressors controlling cell death commitment.</title>
        <authorList>
            <person name="Thiebault K."/>
            <person name="Mazelin L."/>
            <person name="Pays L."/>
            <person name="Llambi F."/>
            <person name="Joly M.-O."/>
            <person name="Scoazec J.-Y."/>
            <person name="Saurin J.-C."/>
            <person name="Romeo G."/>
            <person name="Mehlen P."/>
        </authorList>
    </citation>
    <scope>DOWN-REGULATION IN CANCER</scope>
</reference>
<reference key="8">
    <citation type="journal article" date="2005" name="EMBO J.">
        <title>The dependence receptor UNC5H2 mediates apoptosis through DAP-kinase.</title>
        <authorList>
            <person name="Llambi F."/>
            <person name="Lourenco F.C."/>
            <person name="Gozuacik D."/>
            <person name="Guix C."/>
            <person name="Pays L."/>
            <person name="Del Rio G."/>
            <person name="Kimchi A."/>
            <person name="Mehlen P."/>
        </authorList>
    </citation>
    <scope>INTERACTION WITH DAPK1</scope>
</reference>
<reference key="9">
    <citation type="journal article" date="2008" name="Exp. Cell Res.">
        <title>Lipid raft localization and palmitoylation: identification of two requirements for cell death induction by the tumor suppressors UNC5H.</title>
        <authorList>
            <person name="Maisse C."/>
            <person name="Rossin A."/>
            <person name="Cahuzac N."/>
            <person name="Paradisi A."/>
            <person name="Klein C."/>
            <person name="Haillot M.L."/>
            <person name="Herincs Z."/>
            <person name="Mehlen P."/>
            <person name="Hueber A.O."/>
        </authorList>
    </citation>
    <scope>INTERACTION WITH DAPK1</scope>
</reference>
<reference key="10">
    <citation type="journal article" date="2014" name="Neuron">
        <title>FLRT structure: balancing repulsion and cell adhesion in cortical and vascular development.</title>
        <authorList>
            <person name="Seiradake E."/>
            <person name="del Toro D."/>
            <person name="Nagel D."/>
            <person name="Cop F."/>
            <person name="Haertl R."/>
            <person name="Ruff T."/>
            <person name="Seyit-Bremer G."/>
            <person name="Harlos K."/>
            <person name="Border E.C."/>
            <person name="Acker-Palmer A."/>
            <person name="Jones E.Y."/>
            <person name="Klein R."/>
        </authorList>
    </citation>
    <scope>INTERACTION WITH FLRT2 AND FLRT3</scope>
    <scope>SUBCELLULAR LOCATION</scope>
</reference>
<reference key="11">
    <citation type="journal article" date="2015" name="Structure">
        <title>Structural basis of latrophilin-FLRT-UNC5 interaction in cell adhesion.</title>
        <authorList>
            <person name="Lu Y.C."/>
            <person name="Nazarko O.V."/>
            <person name="Sando R. III"/>
            <person name="Salzman G.S."/>
            <person name="Suedhof T.C."/>
            <person name="Arac D."/>
        </authorList>
    </citation>
    <scope>INTERACTION WITH FLRT3</scope>
    <scope>SUBUNIT</scope>
</reference>
<name>UNC5B_HUMAN</name>
<keyword id="KW-0025">Alternative splicing</keyword>
<keyword id="KW-0037">Angiogenesis</keyword>
<keyword id="KW-0053">Apoptosis</keyword>
<keyword id="KW-1003">Cell membrane</keyword>
<keyword id="KW-0217">Developmental protein</keyword>
<keyword id="KW-1015">Disulfide bond</keyword>
<keyword id="KW-0325">Glycoprotein</keyword>
<keyword id="KW-0393">Immunoglobulin domain</keyword>
<keyword id="KW-0449">Lipoprotein</keyword>
<keyword id="KW-0472">Membrane</keyword>
<keyword id="KW-0564">Palmitate</keyword>
<keyword id="KW-0597">Phosphoprotein</keyword>
<keyword id="KW-1267">Proteomics identification</keyword>
<keyword id="KW-0675">Receptor</keyword>
<keyword id="KW-1185">Reference proteome</keyword>
<keyword id="KW-0677">Repeat</keyword>
<keyword id="KW-0732">Signal</keyword>
<keyword id="KW-0812">Transmembrane</keyword>
<keyword id="KW-1133">Transmembrane helix</keyword>
<organism>
    <name type="scientific">Homo sapiens</name>
    <name type="common">Human</name>
    <dbReference type="NCBI Taxonomy" id="9606"/>
    <lineage>
        <taxon>Eukaryota</taxon>
        <taxon>Metazoa</taxon>
        <taxon>Chordata</taxon>
        <taxon>Craniata</taxon>
        <taxon>Vertebrata</taxon>
        <taxon>Euteleostomi</taxon>
        <taxon>Mammalia</taxon>
        <taxon>Eutheria</taxon>
        <taxon>Euarchontoglires</taxon>
        <taxon>Primates</taxon>
        <taxon>Haplorrhini</taxon>
        <taxon>Catarrhini</taxon>
        <taxon>Hominidae</taxon>
        <taxon>Homo</taxon>
    </lineage>
</organism>